<proteinExistence type="inferred from homology"/>
<sequence length="356" mass="37959">MKILAAMSGGVDSSVAAARMVDAGHEVVGVHLALSAAPGTLRTGSRGCCSKEDAADARRVADMLGIPFYVWDFADRFKEDVIDDFVEAYAEGRTPNPCVKCNEKIKFAALADRAVALGFDAVATGHYARLQDGRLRRAVDADKDQSYVLGVLTPEQLRRAMFPVGDSPKPDIRAEAEQRGLLVANKPDSHDICFIPSGDTQAFLGARIGVRRGNVVDADGSVLATHAGVHEFTIGQRKGLGLVGPAADGRPRYVTSIDAETATVRVGTVEDLEIWEFGGEPVVWTSGRVPGQPIECQVQVRAHGSVVDAIVEPGAERIHVRLRTALRGVAPGQTVVLYRPDAEGDEVLGSAVITRD</sequence>
<protein>
    <recommendedName>
        <fullName evidence="1">tRNA-specific 2-thiouridylase MnmA</fullName>
        <ecNumber evidence="1">2.8.1.13</ecNumber>
    </recommendedName>
</protein>
<name>MNMA_MYCA9</name>
<reference key="1">
    <citation type="journal article" date="2009" name="PLoS ONE">
        <title>Non mycobacterial virulence genes in the genome of the emerging pathogen Mycobacterium abscessus.</title>
        <authorList>
            <person name="Ripoll F."/>
            <person name="Pasek S."/>
            <person name="Schenowitz C."/>
            <person name="Dossat C."/>
            <person name="Barbe V."/>
            <person name="Rottman M."/>
            <person name="Macheras E."/>
            <person name="Heym B."/>
            <person name="Herrmann J.L."/>
            <person name="Daffe M."/>
            <person name="Brosch R."/>
            <person name="Risler J.L."/>
            <person name="Gaillard J.L."/>
        </authorList>
    </citation>
    <scope>NUCLEOTIDE SEQUENCE [LARGE SCALE GENOMIC DNA]</scope>
    <source>
        <strain>ATCC 19977 / DSM 44196 / CCUG 20993 / CIP 104536 / JCM 13569 / NCTC 13031 / TMC 1543 / L948</strain>
    </source>
</reference>
<keyword id="KW-0067">ATP-binding</keyword>
<keyword id="KW-0963">Cytoplasm</keyword>
<keyword id="KW-1015">Disulfide bond</keyword>
<keyword id="KW-0547">Nucleotide-binding</keyword>
<keyword id="KW-1185">Reference proteome</keyword>
<keyword id="KW-0694">RNA-binding</keyword>
<keyword id="KW-0808">Transferase</keyword>
<keyword id="KW-0819">tRNA processing</keyword>
<keyword id="KW-0820">tRNA-binding</keyword>
<gene>
    <name evidence="1" type="primary">mnmA</name>
    <name type="ordered locus">MAB_3356c</name>
</gene>
<dbReference type="EC" id="2.8.1.13" evidence="1"/>
<dbReference type="EMBL" id="CU458896">
    <property type="protein sequence ID" value="CAM63432.1"/>
    <property type="molecule type" value="Genomic_DNA"/>
</dbReference>
<dbReference type="RefSeq" id="WP_005093979.1">
    <property type="nucleotide sequence ID" value="NZ_MLCG01000001.1"/>
</dbReference>
<dbReference type="SMR" id="B1MDW3"/>
<dbReference type="GeneID" id="93380292"/>
<dbReference type="KEGG" id="mab:MAB_3356c"/>
<dbReference type="Proteomes" id="UP000007137">
    <property type="component" value="Chromosome"/>
</dbReference>
<dbReference type="GO" id="GO:0005737">
    <property type="term" value="C:cytoplasm"/>
    <property type="evidence" value="ECO:0007669"/>
    <property type="project" value="UniProtKB-SubCell"/>
</dbReference>
<dbReference type="GO" id="GO:0005524">
    <property type="term" value="F:ATP binding"/>
    <property type="evidence" value="ECO:0007669"/>
    <property type="project" value="UniProtKB-KW"/>
</dbReference>
<dbReference type="GO" id="GO:0000049">
    <property type="term" value="F:tRNA binding"/>
    <property type="evidence" value="ECO:0007669"/>
    <property type="project" value="UniProtKB-KW"/>
</dbReference>
<dbReference type="GO" id="GO:0103016">
    <property type="term" value="F:tRNA-uridine 2-sulfurtransferase activity"/>
    <property type="evidence" value="ECO:0007669"/>
    <property type="project" value="UniProtKB-EC"/>
</dbReference>
<dbReference type="GO" id="GO:0002143">
    <property type="term" value="P:tRNA wobble position uridine thiolation"/>
    <property type="evidence" value="ECO:0007669"/>
    <property type="project" value="TreeGrafter"/>
</dbReference>
<dbReference type="CDD" id="cd01998">
    <property type="entry name" value="MnmA_TRMU-like"/>
    <property type="match status" value="1"/>
</dbReference>
<dbReference type="FunFam" id="3.40.50.620:FF:000057">
    <property type="entry name" value="tRNA-specific 2-thiouridylase MnmA"/>
    <property type="match status" value="1"/>
</dbReference>
<dbReference type="Gene3D" id="2.30.30.280">
    <property type="entry name" value="Adenine nucleotide alpha hydrolases-like domains"/>
    <property type="match status" value="1"/>
</dbReference>
<dbReference type="Gene3D" id="3.40.50.620">
    <property type="entry name" value="HUPs"/>
    <property type="match status" value="1"/>
</dbReference>
<dbReference type="Gene3D" id="2.40.30.10">
    <property type="entry name" value="Translation factors"/>
    <property type="match status" value="1"/>
</dbReference>
<dbReference type="HAMAP" id="MF_00144">
    <property type="entry name" value="tRNA_thiouridyl_MnmA"/>
    <property type="match status" value="1"/>
</dbReference>
<dbReference type="InterPro" id="IPR004506">
    <property type="entry name" value="MnmA-like"/>
</dbReference>
<dbReference type="InterPro" id="IPR046885">
    <property type="entry name" value="MnmA-like_C"/>
</dbReference>
<dbReference type="InterPro" id="IPR046884">
    <property type="entry name" value="MnmA-like_central"/>
</dbReference>
<dbReference type="InterPro" id="IPR023382">
    <property type="entry name" value="MnmA-like_central_sf"/>
</dbReference>
<dbReference type="InterPro" id="IPR014729">
    <property type="entry name" value="Rossmann-like_a/b/a_fold"/>
</dbReference>
<dbReference type="NCBIfam" id="NF001138">
    <property type="entry name" value="PRK00143.1"/>
    <property type="match status" value="1"/>
</dbReference>
<dbReference type="NCBIfam" id="TIGR00420">
    <property type="entry name" value="trmU"/>
    <property type="match status" value="1"/>
</dbReference>
<dbReference type="PANTHER" id="PTHR11933:SF5">
    <property type="entry name" value="MITOCHONDRIAL TRNA-SPECIFIC 2-THIOURIDYLASE 1"/>
    <property type="match status" value="1"/>
</dbReference>
<dbReference type="PANTHER" id="PTHR11933">
    <property type="entry name" value="TRNA 5-METHYLAMINOMETHYL-2-THIOURIDYLATE -METHYLTRANSFERASE"/>
    <property type="match status" value="1"/>
</dbReference>
<dbReference type="Pfam" id="PF03054">
    <property type="entry name" value="tRNA_Me_trans"/>
    <property type="match status" value="1"/>
</dbReference>
<dbReference type="Pfam" id="PF20258">
    <property type="entry name" value="tRNA_Me_trans_C"/>
    <property type="match status" value="1"/>
</dbReference>
<dbReference type="Pfam" id="PF20259">
    <property type="entry name" value="tRNA_Me_trans_M"/>
    <property type="match status" value="1"/>
</dbReference>
<dbReference type="SUPFAM" id="SSF52402">
    <property type="entry name" value="Adenine nucleotide alpha hydrolases-like"/>
    <property type="match status" value="1"/>
</dbReference>
<feature type="chain" id="PRO_1000096298" description="tRNA-specific 2-thiouridylase MnmA">
    <location>
        <begin position="1"/>
        <end position="356"/>
    </location>
</feature>
<feature type="region of interest" description="Interaction with tRNA" evidence="1">
    <location>
        <begin position="143"/>
        <end position="145"/>
    </location>
</feature>
<feature type="active site" description="Nucleophile" evidence="1">
    <location>
        <position position="101"/>
    </location>
</feature>
<feature type="active site" description="Cysteine persulfide intermediate" evidence="1">
    <location>
        <position position="193"/>
    </location>
</feature>
<feature type="binding site" evidence="1">
    <location>
        <begin position="6"/>
        <end position="13"/>
    </location>
    <ligand>
        <name>ATP</name>
        <dbReference type="ChEBI" id="CHEBI:30616"/>
    </ligand>
</feature>
<feature type="binding site" evidence="1">
    <location>
        <position position="32"/>
    </location>
    <ligand>
        <name>ATP</name>
        <dbReference type="ChEBI" id="CHEBI:30616"/>
    </ligand>
</feature>
<feature type="binding site" evidence="1">
    <location>
        <position position="125"/>
    </location>
    <ligand>
        <name>ATP</name>
        <dbReference type="ChEBI" id="CHEBI:30616"/>
    </ligand>
</feature>
<feature type="site" description="Interaction with tRNA" evidence="1">
    <location>
        <position position="126"/>
    </location>
</feature>
<feature type="site" description="Interaction with tRNA" evidence="1">
    <location>
        <position position="333"/>
    </location>
</feature>
<feature type="disulfide bond" description="Alternate" evidence="1">
    <location>
        <begin position="101"/>
        <end position="193"/>
    </location>
</feature>
<accession>B1MDW3</accession>
<evidence type="ECO:0000255" key="1">
    <source>
        <dbReference type="HAMAP-Rule" id="MF_00144"/>
    </source>
</evidence>
<comment type="function">
    <text evidence="1">Catalyzes the 2-thiolation of uridine at the wobble position (U34) of tRNA, leading to the formation of s(2)U34.</text>
</comment>
<comment type="catalytic activity">
    <reaction evidence="1">
        <text>S-sulfanyl-L-cysteinyl-[protein] + uridine(34) in tRNA + AH2 + ATP = 2-thiouridine(34) in tRNA + L-cysteinyl-[protein] + A + AMP + diphosphate + H(+)</text>
        <dbReference type="Rhea" id="RHEA:47032"/>
        <dbReference type="Rhea" id="RHEA-COMP:10131"/>
        <dbReference type="Rhea" id="RHEA-COMP:11726"/>
        <dbReference type="Rhea" id="RHEA-COMP:11727"/>
        <dbReference type="Rhea" id="RHEA-COMP:11728"/>
        <dbReference type="ChEBI" id="CHEBI:13193"/>
        <dbReference type="ChEBI" id="CHEBI:15378"/>
        <dbReference type="ChEBI" id="CHEBI:17499"/>
        <dbReference type="ChEBI" id="CHEBI:29950"/>
        <dbReference type="ChEBI" id="CHEBI:30616"/>
        <dbReference type="ChEBI" id="CHEBI:33019"/>
        <dbReference type="ChEBI" id="CHEBI:61963"/>
        <dbReference type="ChEBI" id="CHEBI:65315"/>
        <dbReference type="ChEBI" id="CHEBI:87170"/>
        <dbReference type="ChEBI" id="CHEBI:456215"/>
        <dbReference type="EC" id="2.8.1.13"/>
    </reaction>
</comment>
<comment type="subcellular location">
    <subcellularLocation>
        <location evidence="1">Cytoplasm</location>
    </subcellularLocation>
</comment>
<comment type="similarity">
    <text evidence="1">Belongs to the MnmA/TRMU family.</text>
</comment>
<organism>
    <name type="scientific">Mycobacteroides abscessus (strain ATCC 19977 / DSM 44196 / CCUG 20993 / CIP 104536 / JCM 13569 / NCTC 13031 / TMC 1543 / L948)</name>
    <name type="common">Mycobacterium abscessus</name>
    <dbReference type="NCBI Taxonomy" id="561007"/>
    <lineage>
        <taxon>Bacteria</taxon>
        <taxon>Bacillati</taxon>
        <taxon>Actinomycetota</taxon>
        <taxon>Actinomycetes</taxon>
        <taxon>Mycobacteriales</taxon>
        <taxon>Mycobacteriaceae</taxon>
        <taxon>Mycobacteroides</taxon>
        <taxon>Mycobacteroides abscessus</taxon>
    </lineage>
</organism>